<name>RL19_METNO</name>
<gene>
    <name evidence="1" type="primary">rplS</name>
    <name type="ordered locus">Mnod_4426</name>
</gene>
<organism>
    <name type="scientific">Methylobacterium nodulans (strain LMG 21967 / CNCM I-2342 / ORS 2060)</name>
    <dbReference type="NCBI Taxonomy" id="460265"/>
    <lineage>
        <taxon>Bacteria</taxon>
        <taxon>Pseudomonadati</taxon>
        <taxon>Pseudomonadota</taxon>
        <taxon>Alphaproteobacteria</taxon>
        <taxon>Hyphomicrobiales</taxon>
        <taxon>Methylobacteriaceae</taxon>
        <taxon>Methylobacterium</taxon>
    </lineage>
</organism>
<comment type="function">
    <text evidence="1">This protein is located at the 30S-50S ribosomal subunit interface and may play a role in the structure and function of the aminoacyl-tRNA binding site.</text>
</comment>
<comment type="similarity">
    <text evidence="1">Belongs to the bacterial ribosomal protein bL19 family.</text>
</comment>
<dbReference type="EMBL" id="CP001349">
    <property type="protein sequence ID" value="ACL59296.1"/>
    <property type="molecule type" value="Genomic_DNA"/>
</dbReference>
<dbReference type="RefSeq" id="WP_015930936.1">
    <property type="nucleotide sequence ID" value="NC_011894.1"/>
</dbReference>
<dbReference type="SMR" id="B8IBP2"/>
<dbReference type="STRING" id="460265.Mnod_4426"/>
<dbReference type="KEGG" id="mno:Mnod_4426"/>
<dbReference type="eggNOG" id="COG0335">
    <property type="taxonomic scope" value="Bacteria"/>
</dbReference>
<dbReference type="HOGENOM" id="CLU_103507_2_1_5"/>
<dbReference type="OrthoDB" id="9803541at2"/>
<dbReference type="Proteomes" id="UP000008207">
    <property type="component" value="Chromosome"/>
</dbReference>
<dbReference type="GO" id="GO:0022625">
    <property type="term" value="C:cytosolic large ribosomal subunit"/>
    <property type="evidence" value="ECO:0007669"/>
    <property type="project" value="TreeGrafter"/>
</dbReference>
<dbReference type="GO" id="GO:0003735">
    <property type="term" value="F:structural constituent of ribosome"/>
    <property type="evidence" value="ECO:0007669"/>
    <property type="project" value="InterPro"/>
</dbReference>
<dbReference type="GO" id="GO:0006412">
    <property type="term" value="P:translation"/>
    <property type="evidence" value="ECO:0007669"/>
    <property type="project" value="UniProtKB-UniRule"/>
</dbReference>
<dbReference type="FunFam" id="2.30.30.790:FF:000001">
    <property type="entry name" value="50S ribosomal protein L19"/>
    <property type="match status" value="1"/>
</dbReference>
<dbReference type="Gene3D" id="2.30.30.790">
    <property type="match status" value="1"/>
</dbReference>
<dbReference type="HAMAP" id="MF_00402">
    <property type="entry name" value="Ribosomal_bL19"/>
    <property type="match status" value="1"/>
</dbReference>
<dbReference type="InterPro" id="IPR001857">
    <property type="entry name" value="Ribosomal_bL19"/>
</dbReference>
<dbReference type="InterPro" id="IPR018257">
    <property type="entry name" value="Ribosomal_bL19_CS"/>
</dbReference>
<dbReference type="InterPro" id="IPR038657">
    <property type="entry name" value="Ribosomal_bL19_sf"/>
</dbReference>
<dbReference type="InterPro" id="IPR008991">
    <property type="entry name" value="Translation_prot_SH3-like_sf"/>
</dbReference>
<dbReference type="NCBIfam" id="TIGR01024">
    <property type="entry name" value="rplS_bact"/>
    <property type="match status" value="1"/>
</dbReference>
<dbReference type="PANTHER" id="PTHR15680:SF9">
    <property type="entry name" value="LARGE RIBOSOMAL SUBUNIT PROTEIN BL19M"/>
    <property type="match status" value="1"/>
</dbReference>
<dbReference type="PANTHER" id="PTHR15680">
    <property type="entry name" value="RIBOSOMAL PROTEIN L19"/>
    <property type="match status" value="1"/>
</dbReference>
<dbReference type="Pfam" id="PF01245">
    <property type="entry name" value="Ribosomal_L19"/>
    <property type="match status" value="1"/>
</dbReference>
<dbReference type="PIRSF" id="PIRSF002191">
    <property type="entry name" value="Ribosomal_L19"/>
    <property type="match status" value="1"/>
</dbReference>
<dbReference type="PRINTS" id="PR00061">
    <property type="entry name" value="RIBOSOMALL19"/>
</dbReference>
<dbReference type="SUPFAM" id="SSF50104">
    <property type="entry name" value="Translation proteins SH3-like domain"/>
    <property type="match status" value="1"/>
</dbReference>
<dbReference type="PROSITE" id="PS01015">
    <property type="entry name" value="RIBOSOMAL_L19"/>
    <property type="match status" value="1"/>
</dbReference>
<keyword id="KW-1185">Reference proteome</keyword>
<keyword id="KW-0687">Ribonucleoprotein</keyword>
<keyword id="KW-0689">Ribosomal protein</keyword>
<accession>B8IBP2</accession>
<evidence type="ECO:0000255" key="1">
    <source>
        <dbReference type="HAMAP-Rule" id="MF_00402"/>
    </source>
</evidence>
<evidence type="ECO:0000256" key="2">
    <source>
        <dbReference type="SAM" id="MobiDB-lite"/>
    </source>
</evidence>
<evidence type="ECO:0000305" key="3"/>
<proteinExistence type="inferred from homology"/>
<protein>
    <recommendedName>
        <fullName evidence="1">Large ribosomal subunit protein bL19</fullName>
    </recommendedName>
    <alternativeName>
        <fullName evidence="3">50S ribosomal protein L19</fullName>
    </alternativeName>
</protein>
<reference key="1">
    <citation type="submission" date="2009-01" db="EMBL/GenBank/DDBJ databases">
        <title>Complete sequence of chromosome of Methylobacterium nodulans ORS 2060.</title>
        <authorList>
            <consortium name="US DOE Joint Genome Institute"/>
            <person name="Lucas S."/>
            <person name="Copeland A."/>
            <person name="Lapidus A."/>
            <person name="Glavina del Rio T."/>
            <person name="Dalin E."/>
            <person name="Tice H."/>
            <person name="Bruce D."/>
            <person name="Goodwin L."/>
            <person name="Pitluck S."/>
            <person name="Sims D."/>
            <person name="Brettin T."/>
            <person name="Detter J.C."/>
            <person name="Han C."/>
            <person name="Larimer F."/>
            <person name="Land M."/>
            <person name="Hauser L."/>
            <person name="Kyrpides N."/>
            <person name="Ivanova N."/>
            <person name="Marx C.J."/>
            <person name="Richardson P."/>
        </authorList>
    </citation>
    <scope>NUCLEOTIDE SEQUENCE [LARGE SCALE GENOMIC DNA]</scope>
    <source>
        <strain>LMG 21967 / CNCM I-2342 / ORS 2060</strain>
    </source>
</reference>
<feature type="chain" id="PRO_1000193863" description="Large ribosomal subunit protein bL19">
    <location>
        <begin position="1"/>
        <end position="131"/>
    </location>
</feature>
<feature type="region of interest" description="Disordered" evidence="2">
    <location>
        <begin position="111"/>
        <end position="131"/>
    </location>
</feature>
<feature type="compositionally biased region" description="Basic and acidic residues" evidence="2">
    <location>
        <begin position="111"/>
        <end position="124"/>
    </location>
</feature>
<sequence>MNIIQQLEQEQIAQLNKTIPDFEPGDTVVVNVKVKEGDRTRVQAYEGVCIARAGGGLNENFTVRKISYGEGVERVFPIYSPLIDSIKVVRRGKVRRAKLYYLRDRRGKAARIAERAERGSEKGKTTPAAAE</sequence>